<accession>Q6MGL5</accession>
<sequence>MGPMIRGDRDKDTICAISTPHGVGGISVIRVSGPQTLNIVSKICQFLPAHPESHKVYFGNLKNSQTGDEIDEVLATYFKEGRSFTGEEVIEISCHGSPLICQTILNQLVNLGARPADRGEFTFRAFMNGKLDLVQAESVLSLIESQSQQAAKLALRQLKGTLSHKLEEIEDDMTWILAHAEASIDFSTEGIEVIEENVIQVRLKKIEAGLKELVATFKVGRLLKDGFRIVLTGLPNVGKSSLLNLFLEDERAIVTDIPGTTRDVIHGDTTFEGVKFTFVDTAGLRDEATDLVERIGIQKSYEAQNESDVVFFVYDIEKGLGAEELQILESLDPAKTYILANKTDKIGGSKPLETVEKTLKNSKFFQKLADPAAFFTRRVFFVSALDKKVRSEVLKDLVKEFADLQVENTVLISNARHFENLTRALENTQRSQSVVAQGLGAEFLALEFKEALIAIHETLGKRFDDQIMDRVFKEFCIGK</sequence>
<evidence type="ECO:0000255" key="1">
    <source>
        <dbReference type="HAMAP-Rule" id="MF_00379"/>
    </source>
</evidence>
<dbReference type="EC" id="3.6.-.-" evidence="1"/>
<dbReference type="EMBL" id="BX842656">
    <property type="protein sequence ID" value="CAE81264.1"/>
    <property type="molecule type" value="Genomic_DNA"/>
</dbReference>
<dbReference type="SMR" id="Q6MGL5"/>
<dbReference type="STRING" id="264462.Bd3910"/>
<dbReference type="KEGG" id="bba:Bd3910"/>
<dbReference type="eggNOG" id="COG0486">
    <property type="taxonomic scope" value="Bacteria"/>
</dbReference>
<dbReference type="HOGENOM" id="CLU_019624_4_1_7"/>
<dbReference type="Proteomes" id="UP000008080">
    <property type="component" value="Chromosome"/>
</dbReference>
<dbReference type="GO" id="GO:0005829">
    <property type="term" value="C:cytosol"/>
    <property type="evidence" value="ECO:0007669"/>
    <property type="project" value="TreeGrafter"/>
</dbReference>
<dbReference type="GO" id="GO:0005525">
    <property type="term" value="F:GTP binding"/>
    <property type="evidence" value="ECO:0007669"/>
    <property type="project" value="UniProtKB-UniRule"/>
</dbReference>
<dbReference type="GO" id="GO:0003924">
    <property type="term" value="F:GTPase activity"/>
    <property type="evidence" value="ECO:0007669"/>
    <property type="project" value="UniProtKB-UniRule"/>
</dbReference>
<dbReference type="GO" id="GO:0046872">
    <property type="term" value="F:metal ion binding"/>
    <property type="evidence" value="ECO:0007669"/>
    <property type="project" value="UniProtKB-KW"/>
</dbReference>
<dbReference type="GO" id="GO:0030488">
    <property type="term" value="P:tRNA methylation"/>
    <property type="evidence" value="ECO:0007669"/>
    <property type="project" value="TreeGrafter"/>
</dbReference>
<dbReference type="GO" id="GO:0002098">
    <property type="term" value="P:tRNA wobble uridine modification"/>
    <property type="evidence" value="ECO:0007669"/>
    <property type="project" value="TreeGrafter"/>
</dbReference>
<dbReference type="CDD" id="cd04164">
    <property type="entry name" value="trmE"/>
    <property type="match status" value="1"/>
</dbReference>
<dbReference type="CDD" id="cd14858">
    <property type="entry name" value="TrmE_N"/>
    <property type="match status" value="1"/>
</dbReference>
<dbReference type="Gene3D" id="3.40.50.300">
    <property type="entry name" value="P-loop containing nucleotide triphosphate hydrolases"/>
    <property type="match status" value="1"/>
</dbReference>
<dbReference type="Gene3D" id="3.30.1360.120">
    <property type="entry name" value="Probable tRNA modification gtpase trme, domain 1"/>
    <property type="match status" value="1"/>
</dbReference>
<dbReference type="Gene3D" id="1.20.120.430">
    <property type="entry name" value="tRNA modification GTPase MnmE domain 2"/>
    <property type="match status" value="1"/>
</dbReference>
<dbReference type="HAMAP" id="MF_00379">
    <property type="entry name" value="GTPase_MnmE"/>
    <property type="match status" value="1"/>
</dbReference>
<dbReference type="InterPro" id="IPR031168">
    <property type="entry name" value="G_TrmE"/>
</dbReference>
<dbReference type="InterPro" id="IPR006073">
    <property type="entry name" value="GTP-bd"/>
</dbReference>
<dbReference type="InterPro" id="IPR018948">
    <property type="entry name" value="GTP-bd_TrmE_N"/>
</dbReference>
<dbReference type="InterPro" id="IPR004520">
    <property type="entry name" value="GTPase_MnmE"/>
</dbReference>
<dbReference type="InterPro" id="IPR027368">
    <property type="entry name" value="MnmE_dom2"/>
</dbReference>
<dbReference type="InterPro" id="IPR025867">
    <property type="entry name" value="MnmE_helical"/>
</dbReference>
<dbReference type="InterPro" id="IPR027417">
    <property type="entry name" value="P-loop_NTPase"/>
</dbReference>
<dbReference type="InterPro" id="IPR005225">
    <property type="entry name" value="Small_GTP-bd"/>
</dbReference>
<dbReference type="InterPro" id="IPR027266">
    <property type="entry name" value="TrmE/GcvT_dom1"/>
</dbReference>
<dbReference type="NCBIfam" id="TIGR00450">
    <property type="entry name" value="mnmE_trmE_thdF"/>
    <property type="match status" value="1"/>
</dbReference>
<dbReference type="NCBIfam" id="TIGR00231">
    <property type="entry name" value="small_GTP"/>
    <property type="match status" value="1"/>
</dbReference>
<dbReference type="PANTHER" id="PTHR42714">
    <property type="entry name" value="TRNA MODIFICATION GTPASE GTPBP3"/>
    <property type="match status" value="1"/>
</dbReference>
<dbReference type="PANTHER" id="PTHR42714:SF2">
    <property type="entry name" value="TRNA MODIFICATION GTPASE GTPBP3, MITOCHONDRIAL"/>
    <property type="match status" value="1"/>
</dbReference>
<dbReference type="Pfam" id="PF01926">
    <property type="entry name" value="MMR_HSR1"/>
    <property type="match status" value="1"/>
</dbReference>
<dbReference type="Pfam" id="PF12631">
    <property type="entry name" value="MnmE_helical"/>
    <property type="match status" value="1"/>
</dbReference>
<dbReference type="Pfam" id="PF10396">
    <property type="entry name" value="TrmE_N"/>
    <property type="match status" value="1"/>
</dbReference>
<dbReference type="SUPFAM" id="SSF52540">
    <property type="entry name" value="P-loop containing nucleoside triphosphate hydrolases"/>
    <property type="match status" value="1"/>
</dbReference>
<dbReference type="PROSITE" id="PS51709">
    <property type="entry name" value="G_TRME"/>
    <property type="match status" value="1"/>
</dbReference>
<name>MNME_BDEBA</name>
<protein>
    <recommendedName>
        <fullName evidence="1">tRNA modification GTPase MnmE</fullName>
        <ecNumber evidence="1">3.6.-.-</ecNumber>
    </recommendedName>
</protein>
<feature type="chain" id="PRO_0000345720" description="tRNA modification GTPase MnmE">
    <location>
        <begin position="1"/>
        <end position="479"/>
    </location>
</feature>
<feature type="domain" description="TrmE-type G">
    <location>
        <begin position="226"/>
        <end position="402"/>
    </location>
</feature>
<feature type="binding site" evidence="1">
    <location>
        <position position="30"/>
    </location>
    <ligand>
        <name>(6S)-5-formyl-5,6,7,8-tetrahydrofolate</name>
        <dbReference type="ChEBI" id="CHEBI:57457"/>
    </ligand>
</feature>
<feature type="binding site" evidence="1">
    <location>
        <position position="91"/>
    </location>
    <ligand>
        <name>(6S)-5-formyl-5,6,7,8-tetrahydrofolate</name>
        <dbReference type="ChEBI" id="CHEBI:57457"/>
    </ligand>
</feature>
<feature type="binding site" evidence="1">
    <location>
        <position position="130"/>
    </location>
    <ligand>
        <name>(6S)-5-formyl-5,6,7,8-tetrahydrofolate</name>
        <dbReference type="ChEBI" id="CHEBI:57457"/>
    </ligand>
</feature>
<feature type="binding site" evidence="1">
    <location>
        <begin position="236"/>
        <end position="241"/>
    </location>
    <ligand>
        <name>GTP</name>
        <dbReference type="ChEBI" id="CHEBI:37565"/>
    </ligand>
</feature>
<feature type="binding site" evidence="1">
    <location>
        <position position="236"/>
    </location>
    <ligand>
        <name>K(+)</name>
        <dbReference type="ChEBI" id="CHEBI:29103"/>
    </ligand>
</feature>
<feature type="binding site" evidence="1">
    <location>
        <position position="240"/>
    </location>
    <ligand>
        <name>Mg(2+)</name>
        <dbReference type="ChEBI" id="CHEBI:18420"/>
    </ligand>
</feature>
<feature type="binding site" evidence="1">
    <location>
        <begin position="255"/>
        <end position="261"/>
    </location>
    <ligand>
        <name>GTP</name>
        <dbReference type="ChEBI" id="CHEBI:37565"/>
    </ligand>
</feature>
<feature type="binding site" evidence="1">
    <location>
        <position position="255"/>
    </location>
    <ligand>
        <name>K(+)</name>
        <dbReference type="ChEBI" id="CHEBI:29103"/>
    </ligand>
</feature>
<feature type="binding site" evidence="1">
    <location>
        <position position="257"/>
    </location>
    <ligand>
        <name>K(+)</name>
        <dbReference type="ChEBI" id="CHEBI:29103"/>
    </ligand>
</feature>
<feature type="binding site" evidence="1">
    <location>
        <position position="260"/>
    </location>
    <ligand>
        <name>K(+)</name>
        <dbReference type="ChEBI" id="CHEBI:29103"/>
    </ligand>
</feature>
<feature type="binding site" evidence="1">
    <location>
        <position position="261"/>
    </location>
    <ligand>
        <name>Mg(2+)</name>
        <dbReference type="ChEBI" id="CHEBI:18420"/>
    </ligand>
</feature>
<feature type="binding site" evidence="1">
    <location>
        <begin position="280"/>
        <end position="283"/>
    </location>
    <ligand>
        <name>GTP</name>
        <dbReference type="ChEBI" id="CHEBI:37565"/>
    </ligand>
</feature>
<feature type="binding site" evidence="1">
    <location>
        <position position="479"/>
    </location>
    <ligand>
        <name>(6S)-5-formyl-5,6,7,8-tetrahydrofolate</name>
        <dbReference type="ChEBI" id="CHEBI:57457"/>
    </ligand>
</feature>
<comment type="function">
    <text evidence="1">Exhibits a very high intrinsic GTPase hydrolysis rate. Involved in the addition of a carboxymethylaminomethyl (cmnm) group at the wobble position (U34) of certain tRNAs, forming tRNA-cmnm(5)s(2)U34.</text>
</comment>
<comment type="cofactor">
    <cofactor evidence="1">
        <name>K(+)</name>
        <dbReference type="ChEBI" id="CHEBI:29103"/>
    </cofactor>
    <text evidence="1">Binds 1 potassium ion per subunit.</text>
</comment>
<comment type="subunit">
    <text evidence="1">Homodimer. Heterotetramer of two MnmE and two MnmG subunits.</text>
</comment>
<comment type="subcellular location">
    <subcellularLocation>
        <location evidence="1">Cytoplasm</location>
    </subcellularLocation>
</comment>
<comment type="similarity">
    <text evidence="1">Belongs to the TRAFAC class TrmE-Era-EngA-EngB-Septin-like GTPase superfamily. TrmE GTPase family.</text>
</comment>
<reference key="1">
    <citation type="journal article" date="2004" name="Science">
        <title>A predator unmasked: life cycle of Bdellovibrio bacteriovorus from a genomic perspective.</title>
        <authorList>
            <person name="Rendulic S."/>
            <person name="Jagtap P."/>
            <person name="Rosinus A."/>
            <person name="Eppinger M."/>
            <person name="Baar C."/>
            <person name="Lanz C."/>
            <person name="Keller H."/>
            <person name="Lambert C."/>
            <person name="Evans K.J."/>
            <person name="Goesmann A."/>
            <person name="Meyer F."/>
            <person name="Sockett R.E."/>
            <person name="Schuster S.C."/>
        </authorList>
    </citation>
    <scope>NUCLEOTIDE SEQUENCE [LARGE SCALE GENOMIC DNA]</scope>
    <source>
        <strain>ATCC 15356 / DSM 50701 / NCIMB 9529 / HD100</strain>
    </source>
</reference>
<organism>
    <name type="scientific">Bdellovibrio bacteriovorus (strain ATCC 15356 / DSM 50701 / NCIMB 9529 / HD100)</name>
    <dbReference type="NCBI Taxonomy" id="264462"/>
    <lineage>
        <taxon>Bacteria</taxon>
        <taxon>Pseudomonadati</taxon>
        <taxon>Bdellovibrionota</taxon>
        <taxon>Bdellovibrionia</taxon>
        <taxon>Bdellovibrionales</taxon>
        <taxon>Pseudobdellovibrionaceae</taxon>
        <taxon>Bdellovibrio</taxon>
    </lineage>
</organism>
<gene>
    <name evidence="1" type="primary">mnmE</name>
    <name evidence="1" type="synonym">trmE</name>
    <name type="ordered locus">Bd3910</name>
</gene>
<proteinExistence type="inferred from homology"/>
<keyword id="KW-0963">Cytoplasm</keyword>
<keyword id="KW-0342">GTP-binding</keyword>
<keyword id="KW-0378">Hydrolase</keyword>
<keyword id="KW-0460">Magnesium</keyword>
<keyword id="KW-0479">Metal-binding</keyword>
<keyword id="KW-0547">Nucleotide-binding</keyword>
<keyword id="KW-0630">Potassium</keyword>
<keyword id="KW-1185">Reference proteome</keyword>
<keyword id="KW-0819">tRNA processing</keyword>